<feature type="chain" id="PRO_0000192206" description="33 kDa chaperonin">
    <location>
        <begin position="1"/>
        <end position="293"/>
    </location>
</feature>
<feature type="disulfide bond" description="Redox-active" evidence="1">
    <location>
        <begin position="238"/>
        <end position="240"/>
    </location>
</feature>
<feature type="disulfide bond" description="Redox-active" evidence="1">
    <location>
        <begin position="271"/>
        <end position="274"/>
    </location>
</feature>
<dbReference type="EMBL" id="CP000029">
    <property type="protein sequence ID" value="AAW53520.1"/>
    <property type="molecule type" value="Genomic_DNA"/>
</dbReference>
<dbReference type="RefSeq" id="WP_001832190.1">
    <property type="nucleotide sequence ID" value="NC_002976.3"/>
</dbReference>
<dbReference type="SMR" id="Q5HRP2"/>
<dbReference type="STRING" id="176279.SERP0151"/>
<dbReference type="GeneID" id="50019577"/>
<dbReference type="KEGG" id="ser:SERP0151"/>
<dbReference type="eggNOG" id="COG1281">
    <property type="taxonomic scope" value="Bacteria"/>
</dbReference>
<dbReference type="HOGENOM" id="CLU_054493_1_0_9"/>
<dbReference type="Proteomes" id="UP000000531">
    <property type="component" value="Chromosome"/>
</dbReference>
<dbReference type="GO" id="GO:0005737">
    <property type="term" value="C:cytoplasm"/>
    <property type="evidence" value="ECO:0007669"/>
    <property type="project" value="UniProtKB-SubCell"/>
</dbReference>
<dbReference type="GO" id="GO:0044183">
    <property type="term" value="F:protein folding chaperone"/>
    <property type="evidence" value="ECO:0007669"/>
    <property type="project" value="TreeGrafter"/>
</dbReference>
<dbReference type="GO" id="GO:0051082">
    <property type="term" value="F:unfolded protein binding"/>
    <property type="evidence" value="ECO:0007669"/>
    <property type="project" value="UniProtKB-UniRule"/>
</dbReference>
<dbReference type="GO" id="GO:0042026">
    <property type="term" value="P:protein refolding"/>
    <property type="evidence" value="ECO:0007669"/>
    <property type="project" value="TreeGrafter"/>
</dbReference>
<dbReference type="CDD" id="cd00498">
    <property type="entry name" value="Hsp33"/>
    <property type="match status" value="1"/>
</dbReference>
<dbReference type="Gene3D" id="3.55.30.10">
    <property type="entry name" value="Hsp33 domain"/>
    <property type="match status" value="1"/>
</dbReference>
<dbReference type="Gene3D" id="3.90.1280.10">
    <property type="entry name" value="HSP33 redox switch-like"/>
    <property type="match status" value="1"/>
</dbReference>
<dbReference type="HAMAP" id="MF_00117">
    <property type="entry name" value="HslO"/>
    <property type="match status" value="1"/>
</dbReference>
<dbReference type="InterPro" id="IPR000397">
    <property type="entry name" value="Heat_shock_Hsp33"/>
</dbReference>
<dbReference type="InterPro" id="IPR016154">
    <property type="entry name" value="Heat_shock_Hsp33_C"/>
</dbReference>
<dbReference type="InterPro" id="IPR016153">
    <property type="entry name" value="Heat_shock_Hsp33_N"/>
</dbReference>
<dbReference type="NCBIfam" id="NF001033">
    <property type="entry name" value="PRK00114.1"/>
    <property type="match status" value="1"/>
</dbReference>
<dbReference type="PANTHER" id="PTHR30111">
    <property type="entry name" value="33 KDA CHAPERONIN"/>
    <property type="match status" value="1"/>
</dbReference>
<dbReference type="PANTHER" id="PTHR30111:SF1">
    <property type="entry name" value="33 KDA CHAPERONIN"/>
    <property type="match status" value="1"/>
</dbReference>
<dbReference type="Pfam" id="PF01430">
    <property type="entry name" value="HSP33"/>
    <property type="match status" value="1"/>
</dbReference>
<dbReference type="PIRSF" id="PIRSF005261">
    <property type="entry name" value="Heat_shock_Hsp33"/>
    <property type="match status" value="1"/>
</dbReference>
<dbReference type="SUPFAM" id="SSF64397">
    <property type="entry name" value="Hsp33 domain"/>
    <property type="match status" value="1"/>
</dbReference>
<dbReference type="SUPFAM" id="SSF118352">
    <property type="entry name" value="HSP33 redox switch-like"/>
    <property type="match status" value="1"/>
</dbReference>
<name>HSLO_STAEQ</name>
<evidence type="ECO:0000255" key="1">
    <source>
        <dbReference type="HAMAP-Rule" id="MF_00117"/>
    </source>
</evidence>
<protein>
    <recommendedName>
        <fullName evidence="1">33 kDa chaperonin</fullName>
    </recommendedName>
    <alternativeName>
        <fullName evidence="1">Heat shock protein 33 homolog</fullName>
        <shortName evidence="1">HSP33</shortName>
    </alternativeName>
</protein>
<sequence>MTHDYIVRGLAYGGEIRAYAAITTESVQEAQTRHYTWPTASAAMGRTMTATVMMGAMLKGNQKLTVTVDGKGPIGRIIADADAQGNVRAYVDHPQTHFPLNDQGKLDVRRAVGTDGSIQVVKDVGMKDYFSGASPIVSGELGDDFTYYYATSEQTPSSVGLGVLVNPDNSIKAAGGFIIQVMPGATDETVTKLEEAISQMQPVSKLIEQGLTPEGILNEILGEGNVQILNSTSAQFECNCSHEKFLNAIKGLGEAEIHSMIKEDHGAEAVCHFCGNKYQYSESELEDLLETMK</sequence>
<proteinExistence type="inferred from homology"/>
<keyword id="KW-0143">Chaperone</keyword>
<keyword id="KW-0963">Cytoplasm</keyword>
<keyword id="KW-1015">Disulfide bond</keyword>
<keyword id="KW-0676">Redox-active center</keyword>
<keyword id="KW-1185">Reference proteome</keyword>
<keyword id="KW-0862">Zinc</keyword>
<accession>Q5HRP2</accession>
<reference key="1">
    <citation type="journal article" date="2005" name="J. Bacteriol.">
        <title>Insights on evolution of virulence and resistance from the complete genome analysis of an early methicillin-resistant Staphylococcus aureus strain and a biofilm-producing methicillin-resistant Staphylococcus epidermidis strain.</title>
        <authorList>
            <person name="Gill S.R."/>
            <person name="Fouts D.E."/>
            <person name="Archer G.L."/>
            <person name="Mongodin E.F."/>
            <person name="DeBoy R.T."/>
            <person name="Ravel J."/>
            <person name="Paulsen I.T."/>
            <person name="Kolonay J.F."/>
            <person name="Brinkac L.M."/>
            <person name="Beanan M.J."/>
            <person name="Dodson R.J."/>
            <person name="Daugherty S.C."/>
            <person name="Madupu R."/>
            <person name="Angiuoli S.V."/>
            <person name="Durkin A.S."/>
            <person name="Haft D.H."/>
            <person name="Vamathevan J.J."/>
            <person name="Khouri H."/>
            <person name="Utterback T.R."/>
            <person name="Lee C."/>
            <person name="Dimitrov G."/>
            <person name="Jiang L."/>
            <person name="Qin H."/>
            <person name="Weidman J."/>
            <person name="Tran K."/>
            <person name="Kang K.H."/>
            <person name="Hance I.R."/>
            <person name="Nelson K.E."/>
            <person name="Fraser C.M."/>
        </authorList>
    </citation>
    <scope>NUCLEOTIDE SEQUENCE [LARGE SCALE GENOMIC DNA]</scope>
    <source>
        <strain>ATCC 35984 / DSM 28319 / BCRC 17069 / CCUG 31568 / BM 3577 / RP62A</strain>
    </source>
</reference>
<gene>
    <name evidence="1" type="primary">hslO</name>
    <name type="ordered locus">SERP0151</name>
</gene>
<comment type="function">
    <text evidence="1">Redox regulated molecular chaperone. Protects both thermally unfolding and oxidatively damaged proteins from irreversible aggregation. Plays an important role in the bacterial defense system toward oxidative stress.</text>
</comment>
<comment type="subcellular location">
    <subcellularLocation>
        <location evidence="1">Cytoplasm</location>
    </subcellularLocation>
</comment>
<comment type="PTM">
    <text evidence="1">Under oxidizing conditions two disulfide bonds are formed involving the reactive cysteines. Under reducing conditions zinc is bound to the reactive cysteines and the protein is inactive.</text>
</comment>
<comment type="similarity">
    <text evidence="1">Belongs to the HSP33 family.</text>
</comment>
<organism>
    <name type="scientific">Staphylococcus epidermidis (strain ATCC 35984 / DSM 28319 / BCRC 17069 / CCUG 31568 / BM 3577 / RP62A)</name>
    <dbReference type="NCBI Taxonomy" id="176279"/>
    <lineage>
        <taxon>Bacteria</taxon>
        <taxon>Bacillati</taxon>
        <taxon>Bacillota</taxon>
        <taxon>Bacilli</taxon>
        <taxon>Bacillales</taxon>
        <taxon>Staphylococcaceae</taxon>
        <taxon>Staphylococcus</taxon>
    </lineage>
</organism>